<feature type="chain" id="PRO_0000331066" description="SsrA-binding protein">
    <location>
        <begin position="1"/>
        <end position="168"/>
    </location>
</feature>
<reference key="1">
    <citation type="submission" date="2006-12" db="EMBL/GenBank/DDBJ databases">
        <title>Complete sequence of chromosome of Mycobacterium sp. KMS.</title>
        <authorList>
            <consortium name="US DOE Joint Genome Institute"/>
            <person name="Copeland A."/>
            <person name="Lucas S."/>
            <person name="Lapidus A."/>
            <person name="Barry K."/>
            <person name="Detter J.C."/>
            <person name="Glavina del Rio T."/>
            <person name="Hammon N."/>
            <person name="Israni S."/>
            <person name="Dalin E."/>
            <person name="Tice H."/>
            <person name="Pitluck S."/>
            <person name="Kiss H."/>
            <person name="Brettin T."/>
            <person name="Bruce D."/>
            <person name="Han C."/>
            <person name="Tapia R."/>
            <person name="Gilna P."/>
            <person name="Schmutz J."/>
            <person name="Larimer F."/>
            <person name="Land M."/>
            <person name="Hauser L."/>
            <person name="Kyrpides N."/>
            <person name="Mikhailova N."/>
            <person name="Miller C.D."/>
            <person name="Richardson P."/>
        </authorList>
    </citation>
    <scope>NUCLEOTIDE SEQUENCE [LARGE SCALE GENOMIC DNA]</scope>
    <source>
        <strain>KMS</strain>
    </source>
</reference>
<keyword id="KW-0963">Cytoplasm</keyword>
<keyword id="KW-0694">RNA-binding</keyword>
<comment type="function">
    <text evidence="1">Required for rescue of stalled ribosomes mediated by trans-translation. Binds to transfer-messenger RNA (tmRNA), required for stable association of tmRNA with ribosomes. tmRNA and SmpB together mimic tRNA shape, replacing the anticodon stem-loop with SmpB. tmRNA is encoded by the ssrA gene; the 2 termini fold to resemble tRNA(Ala) and it encodes a 'tag peptide', a short internal open reading frame. During trans-translation Ala-aminoacylated tmRNA acts like a tRNA, entering the A-site of stalled ribosomes, displacing the stalled mRNA. The ribosome then switches to translate the ORF on the tmRNA; the nascent peptide is terminated with the 'tag peptide' encoded by the tmRNA and targeted for degradation. The ribosome is freed to recommence translation, which seems to be the essential function of trans-translation.</text>
</comment>
<comment type="subcellular location">
    <subcellularLocation>
        <location evidence="1">Cytoplasm</location>
    </subcellularLocation>
    <text evidence="1">The tmRNA-SmpB complex associates with stalled 70S ribosomes.</text>
</comment>
<comment type="similarity">
    <text evidence="1">Belongs to the SmpB family.</text>
</comment>
<gene>
    <name evidence="1" type="primary">smpB</name>
    <name type="ordered locus">Mkms_1638</name>
</gene>
<dbReference type="EMBL" id="CP000518">
    <property type="protein sequence ID" value="ABL90845.1"/>
    <property type="molecule type" value="Genomic_DNA"/>
</dbReference>
<dbReference type="SMR" id="A1UDD7"/>
<dbReference type="STRING" id="189918.Mkms_1638"/>
<dbReference type="KEGG" id="mkm:Mkms_1638"/>
<dbReference type="HOGENOM" id="CLU_108953_2_1_11"/>
<dbReference type="OrthoDB" id="9805462at2"/>
<dbReference type="GO" id="GO:0005829">
    <property type="term" value="C:cytosol"/>
    <property type="evidence" value="ECO:0007669"/>
    <property type="project" value="TreeGrafter"/>
</dbReference>
<dbReference type="GO" id="GO:0003723">
    <property type="term" value="F:RNA binding"/>
    <property type="evidence" value="ECO:0007669"/>
    <property type="project" value="UniProtKB-UniRule"/>
</dbReference>
<dbReference type="GO" id="GO:0070929">
    <property type="term" value="P:trans-translation"/>
    <property type="evidence" value="ECO:0007669"/>
    <property type="project" value="UniProtKB-UniRule"/>
</dbReference>
<dbReference type="CDD" id="cd09294">
    <property type="entry name" value="SmpB"/>
    <property type="match status" value="1"/>
</dbReference>
<dbReference type="Gene3D" id="2.40.280.10">
    <property type="match status" value="1"/>
</dbReference>
<dbReference type="HAMAP" id="MF_00023">
    <property type="entry name" value="SmpB"/>
    <property type="match status" value="1"/>
</dbReference>
<dbReference type="InterPro" id="IPR023620">
    <property type="entry name" value="SmpB"/>
</dbReference>
<dbReference type="InterPro" id="IPR000037">
    <property type="entry name" value="SsrA-bd_prot"/>
</dbReference>
<dbReference type="InterPro" id="IPR020081">
    <property type="entry name" value="SsrA-bd_prot_CS"/>
</dbReference>
<dbReference type="NCBIfam" id="NF003843">
    <property type="entry name" value="PRK05422.1"/>
    <property type="match status" value="1"/>
</dbReference>
<dbReference type="NCBIfam" id="TIGR00086">
    <property type="entry name" value="smpB"/>
    <property type="match status" value="1"/>
</dbReference>
<dbReference type="PANTHER" id="PTHR30308:SF2">
    <property type="entry name" value="SSRA-BINDING PROTEIN"/>
    <property type="match status" value="1"/>
</dbReference>
<dbReference type="PANTHER" id="PTHR30308">
    <property type="entry name" value="TMRNA-BINDING COMPONENT OF TRANS-TRANSLATION TAGGING COMPLEX"/>
    <property type="match status" value="1"/>
</dbReference>
<dbReference type="Pfam" id="PF01668">
    <property type="entry name" value="SmpB"/>
    <property type="match status" value="1"/>
</dbReference>
<dbReference type="SUPFAM" id="SSF74982">
    <property type="entry name" value="Small protein B (SmpB)"/>
    <property type="match status" value="1"/>
</dbReference>
<dbReference type="PROSITE" id="PS01317">
    <property type="entry name" value="SSRP"/>
    <property type="match status" value="1"/>
</dbReference>
<accession>A1UDD7</accession>
<evidence type="ECO:0000255" key="1">
    <source>
        <dbReference type="HAMAP-Rule" id="MF_00023"/>
    </source>
</evidence>
<name>SSRP_MYCSK</name>
<organism>
    <name type="scientific">Mycobacterium sp. (strain KMS)</name>
    <dbReference type="NCBI Taxonomy" id="189918"/>
    <lineage>
        <taxon>Bacteria</taxon>
        <taxon>Bacillati</taxon>
        <taxon>Actinomycetota</taxon>
        <taxon>Actinomycetes</taxon>
        <taxon>Mycobacteriales</taxon>
        <taxon>Mycobacteriaceae</taxon>
        <taxon>Mycobacterium</taxon>
    </lineage>
</organism>
<proteinExistence type="inferred from homology"/>
<protein>
    <recommendedName>
        <fullName evidence="1">SsrA-binding protein</fullName>
    </recommendedName>
    <alternativeName>
        <fullName evidence="1">Small protein B</fullName>
    </alternativeName>
</protein>
<sequence length="168" mass="18845">MAAKKAGKAGATKDRNNQVVASNRRARHNYAILDTYEAGIALMGTEVKSLRDGQASLADAFATVDDGEIWLRNLHIPEYQHGSWTNHAPRRNRKLLLHRREIDNLIGKIRDGNLTLVPLSLYFTGGKVKVELALARGKQAHDKRQDLARRDAEREVVRELGRRAKGMS</sequence>